<evidence type="ECO:0000250" key="1">
    <source>
        <dbReference type="UniProtKB" id="O60828"/>
    </source>
</evidence>
<evidence type="ECO:0000250" key="2">
    <source>
        <dbReference type="UniProtKB" id="Q91VJ5"/>
    </source>
</evidence>
<evidence type="ECO:0000255" key="3">
    <source>
        <dbReference type="PROSITE-ProRule" id="PRU00224"/>
    </source>
</evidence>
<evidence type="ECO:0000256" key="4">
    <source>
        <dbReference type="SAM" id="MobiDB-lite"/>
    </source>
</evidence>
<comment type="function">
    <text evidence="1">Intrinsically disordered protein that acts as a scaffold, and which is involved in different processes, such as pre-mRNA splicing, transcription regulation, innate immunity and neuron development. Interacts with splicing-related factors via the intrinsically disordered region and regulates alternative splicing of target pre-mRNA species. May suppress the ability of POU3F2 to transactivate the DRD1 gene in a POU3F2 dependent manner. Can activate transcription directly or via association with the transcription machinery. May be involved in ATXN1 mutant-induced cell death. The interaction with ATXN1 mutant reduces levels of phosphorylated RNA polymerase II large subunit. Involved in the assembly of cytoplasmic stress granule, possibly by participating in the transport of neuronal RNA granules. Also acts as an innate immune sensor of infection by retroviruses, by detecting the presence of reverse-transcribed DNA in the cytosol. Directly binds retroviral reverse-transcribed DNA in the cytosol and interacts with CGAS, leading to activate the cGAS-STING signaling pathway, triggering type-I interferon production.</text>
</comment>
<comment type="subunit">
    <text evidence="1">Interacts with POU3F2/Brn-2, ATXN1, TXNL4A, HTT and AR. Interaction with ATXN1 correlates positively with the length of the polyglutamine tract. Interacts with RNA polymerase II large subunit in a phosphorylation-dependent manner. Forms a ternary complex with ATXN1 mutant and phosphorylated RNA polymerase II. Interacts (via C-terminus) with TXNL4A and CD2BP2. Interacts (via WW domain) with ATN1 and SF3B1, and may interact with additional splice factors. Interacts (via WW domain) with WBP11; Leading to reduce interaction between PQBP1 and TXNL4A. Interacts with CAPRIN1. Interacts with DDX1. Interacts with SFPQ. Interacts with KHSRP.</text>
</comment>
<comment type="subcellular location">
    <subcellularLocation>
        <location evidence="1">Nucleus</location>
    </subcellularLocation>
    <subcellularLocation>
        <location evidence="2">Nucleus speckle</location>
    </subcellularLocation>
    <subcellularLocation>
        <location evidence="1">Cytoplasmic granule</location>
    </subcellularLocation>
    <text evidence="1 2">Colocalizes with SRSF2 in nuclear speckles (By similarity). Colocalized with POU3F2. Colocalized with ATXN1 in nuclear inclusion bodies. Localizes to cytoplasmic stress granules (By similarity).</text>
</comment>
<comment type="domain">
    <text evidence="1">The WW domain may play a role as a transcriptional activator directly or via association with the transcription machinery. The WW domain mediates interaction with WBP11, ATN1, SF3B1 and the C-terminal domain of the RNA polymerase II large subunit.</text>
</comment>
<comment type="domain">
    <text evidence="1">Except for the WW domain, the protein is intrinsically disordered.</text>
</comment>
<accession>A2T806</accession>
<keyword id="KW-0391">Immunity</keyword>
<keyword id="KW-0399">Innate immunity</keyword>
<keyword id="KW-0507">mRNA processing</keyword>
<keyword id="KW-0508">mRNA splicing</keyword>
<keyword id="KW-0539">Nucleus</keyword>
<keyword id="KW-0597">Phosphoprotein</keyword>
<keyword id="KW-0677">Repeat</keyword>
<keyword id="KW-0804">Transcription</keyword>
<keyword id="KW-0805">Transcription regulation</keyword>
<dbReference type="EMBL" id="DQ977574">
    <property type="protein sequence ID" value="ABM89434.1"/>
    <property type="molecule type" value="Genomic_DNA"/>
</dbReference>
<dbReference type="RefSeq" id="XP_054327465.1">
    <property type="nucleotide sequence ID" value="XM_054471490.2"/>
</dbReference>
<dbReference type="RefSeq" id="XP_054327466.1">
    <property type="nucleotide sequence ID" value="XM_054471491.2"/>
</dbReference>
<dbReference type="RefSeq" id="XP_054327467.1">
    <property type="nucleotide sequence ID" value="XM_054471492.2"/>
</dbReference>
<dbReference type="RefSeq" id="XP_054327468.1">
    <property type="nucleotide sequence ID" value="XM_054471493.2"/>
</dbReference>
<dbReference type="RefSeq" id="XP_054327469.1">
    <property type="nucleotide sequence ID" value="XM_054471494.2"/>
</dbReference>
<dbReference type="SMR" id="A2T806"/>
<dbReference type="GeneID" id="129024428"/>
<dbReference type="OrthoDB" id="42462at2759"/>
<dbReference type="GO" id="GO:0005737">
    <property type="term" value="C:cytoplasm"/>
    <property type="evidence" value="ECO:0007669"/>
    <property type="project" value="TreeGrafter"/>
</dbReference>
<dbReference type="GO" id="GO:0016607">
    <property type="term" value="C:nuclear speck"/>
    <property type="evidence" value="ECO:0000250"/>
    <property type="project" value="UniProtKB"/>
</dbReference>
<dbReference type="GO" id="GO:0003690">
    <property type="term" value="F:double-stranded DNA binding"/>
    <property type="evidence" value="ECO:0000250"/>
    <property type="project" value="UniProtKB"/>
</dbReference>
<dbReference type="GO" id="GO:0043021">
    <property type="term" value="F:ribonucleoprotein complex binding"/>
    <property type="evidence" value="ECO:0007669"/>
    <property type="project" value="TreeGrafter"/>
</dbReference>
<dbReference type="GO" id="GO:0002218">
    <property type="term" value="P:activation of innate immune response"/>
    <property type="evidence" value="ECO:0000250"/>
    <property type="project" value="UniProtKB"/>
</dbReference>
<dbReference type="GO" id="GO:0000380">
    <property type="term" value="P:alternative mRNA splicing, via spliceosome"/>
    <property type="evidence" value="ECO:0000250"/>
    <property type="project" value="UniProtKB"/>
</dbReference>
<dbReference type="GO" id="GO:0071360">
    <property type="term" value="P:cellular response to exogenous dsRNA"/>
    <property type="evidence" value="ECO:0000250"/>
    <property type="project" value="UniProtKB"/>
</dbReference>
<dbReference type="GO" id="GO:0051607">
    <property type="term" value="P:defense response to virus"/>
    <property type="evidence" value="ECO:0000250"/>
    <property type="project" value="UniProtKB"/>
</dbReference>
<dbReference type="GO" id="GO:0045087">
    <property type="term" value="P:innate immune response"/>
    <property type="evidence" value="ECO:0007669"/>
    <property type="project" value="UniProtKB-KW"/>
</dbReference>
<dbReference type="GO" id="GO:0031175">
    <property type="term" value="P:neuron projection development"/>
    <property type="evidence" value="ECO:0000250"/>
    <property type="project" value="UniProtKB"/>
</dbReference>
<dbReference type="GO" id="GO:0002230">
    <property type="term" value="P:positive regulation of defense response to virus by host"/>
    <property type="evidence" value="ECO:0000250"/>
    <property type="project" value="UniProtKB"/>
</dbReference>
<dbReference type="GO" id="GO:0032481">
    <property type="term" value="P:positive regulation of type I interferon production"/>
    <property type="evidence" value="ECO:0000250"/>
    <property type="project" value="UniProtKB"/>
</dbReference>
<dbReference type="FunFam" id="3.40.30.10:FF:000140">
    <property type="entry name" value="polyglutamine-binding protein 1 isoform X1"/>
    <property type="match status" value="1"/>
</dbReference>
<dbReference type="Gene3D" id="2.20.70.10">
    <property type="match status" value="1"/>
</dbReference>
<dbReference type="Gene3D" id="3.40.30.10">
    <property type="entry name" value="Glutaredoxin"/>
    <property type="match status" value="1"/>
</dbReference>
<dbReference type="InterPro" id="IPR001202">
    <property type="entry name" value="WW_dom"/>
</dbReference>
<dbReference type="InterPro" id="IPR036020">
    <property type="entry name" value="WW_dom_sf"/>
</dbReference>
<dbReference type="PANTHER" id="PTHR21737">
    <property type="entry name" value="POLYGLUTAMINE BINDING PROTEIN 1/MARVEL MEMBRANE-ASSOCIATING DOMAIN CONTAINING 3"/>
    <property type="match status" value="1"/>
</dbReference>
<dbReference type="PANTHER" id="PTHR21737:SF3">
    <property type="entry name" value="POLYGLUTAMINE-BINDING PROTEIN 1"/>
    <property type="match status" value="1"/>
</dbReference>
<dbReference type="SMART" id="SM00456">
    <property type="entry name" value="WW"/>
    <property type="match status" value="1"/>
</dbReference>
<dbReference type="SUPFAM" id="SSF51045">
    <property type="entry name" value="WW domain"/>
    <property type="match status" value="1"/>
</dbReference>
<dbReference type="PROSITE" id="PS50020">
    <property type="entry name" value="WW_DOMAIN_2"/>
    <property type="match status" value="1"/>
</dbReference>
<feature type="chain" id="PRO_0000285494" description="Polyglutamine-binding protein 1">
    <location>
        <begin position="1"/>
        <end position="265"/>
    </location>
</feature>
<feature type="domain" description="WW" evidence="3">
    <location>
        <begin position="46"/>
        <end position="80"/>
    </location>
</feature>
<feature type="repeat" description="1-1">
    <location>
        <begin position="104"/>
        <end position="110"/>
    </location>
</feature>
<feature type="repeat" description="1-2">
    <location>
        <begin position="111"/>
        <end position="117"/>
    </location>
</feature>
<feature type="repeat" description="1-3">
    <location>
        <begin position="118"/>
        <end position="124"/>
    </location>
</feature>
<feature type="repeat" description="1-4">
    <location>
        <begin position="125"/>
        <end position="131"/>
    </location>
</feature>
<feature type="repeat" description="1-5">
    <location>
        <begin position="132"/>
        <end position="138"/>
    </location>
</feature>
<feature type="repeat" description="2-1">
    <location>
        <begin position="139"/>
        <end position="140"/>
    </location>
</feature>
<feature type="repeat" description="2-2">
    <location>
        <begin position="141"/>
        <end position="142"/>
    </location>
</feature>
<feature type="repeat" description="2-3">
    <location>
        <begin position="143"/>
        <end position="144"/>
    </location>
</feature>
<feature type="repeat" description="3-1">
    <location>
        <begin position="150"/>
        <end position="151"/>
    </location>
</feature>
<feature type="repeat" description="3-2">
    <location>
        <begin position="152"/>
        <end position="153"/>
    </location>
</feature>
<feature type="repeat" description="3-3">
    <location>
        <begin position="154"/>
        <end position="155"/>
    </location>
</feature>
<feature type="repeat" description="3-4">
    <location>
        <begin position="156"/>
        <end position="157"/>
    </location>
</feature>
<feature type="repeat" description="3-5">
    <location>
        <begin position="158"/>
        <end position="159"/>
    </location>
</feature>
<feature type="repeat" description="3-6">
    <location>
        <begin position="160"/>
        <end position="161"/>
    </location>
</feature>
<feature type="repeat" description="3-7">
    <location>
        <begin position="162"/>
        <end position="163"/>
    </location>
</feature>
<feature type="region of interest" description="Disordered" evidence="1">
    <location>
        <begin position="94"/>
        <end position="265"/>
    </location>
</feature>
<feature type="region of interest" description="5 X 7 AA approximate tandem repeats of D-R-[SG]-H-D-K-S">
    <location>
        <begin position="104"/>
        <end position="138"/>
    </location>
</feature>
<feature type="region of interest" description="3 X 2 AA tandem repeats of [DE]-R">
    <location>
        <begin position="139"/>
        <end position="144"/>
    </location>
</feature>
<feature type="region of interest" description="7 X 2 AA tandem repeats of [DE]-R">
    <location>
        <begin position="150"/>
        <end position="163"/>
    </location>
</feature>
<feature type="region of interest" description="Important for interaction with TXNL4A" evidence="1">
    <location>
        <begin position="245"/>
        <end position="255"/>
    </location>
</feature>
<feature type="compositionally biased region" description="Basic and acidic residues" evidence="4">
    <location>
        <begin position="99"/>
        <end position="175"/>
    </location>
</feature>
<feature type="modified residue" description="Phosphoserine" evidence="1">
    <location>
        <position position="94"/>
    </location>
</feature>
<feature type="modified residue" description="Phosphoserine" evidence="1">
    <location>
        <position position="247"/>
    </location>
</feature>
<gene>
    <name type="primary">PQBP1</name>
</gene>
<name>PQBP1_PONPY</name>
<sequence>MPLPVALQTRLAKRGILKHLEPEPEEEIIAEDYDDDPVDYEATRLEGLPPSWYKVFDPSCGLPYYWNADTDLVSWLSPHDPNSVVTKSAKKLRSSNADAEEKLDRSHDKSDRGHDKSDRSHEKPDRGHDKSDRGHDKSDRDRERGYDKVDRERERDRERDRDRGYDKADREEGKERRHHRREELAPYPKSKKAVSRKDEELDPMDPSSYSDAPRGTWSTGLPKRNEAKTGADTTAAGPLFQQRPYPSPGAVLRANAEASRTKQQD</sequence>
<protein>
    <recommendedName>
        <fullName>Polyglutamine-binding protein 1</fullName>
        <shortName>PQBP-1</shortName>
    </recommendedName>
    <alternativeName>
        <fullName>Polyglutamine tract-binding protein 1</fullName>
    </alternativeName>
</protein>
<organism>
    <name type="scientific">Pongo pygmaeus</name>
    <name type="common">Bornean orangutan</name>
    <dbReference type="NCBI Taxonomy" id="9600"/>
    <lineage>
        <taxon>Eukaryota</taxon>
        <taxon>Metazoa</taxon>
        <taxon>Chordata</taxon>
        <taxon>Craniata</taxon>
        <taxon>Vertebrata</taxon>
        <taxon>Euteleostomi</taxon>
        <taxon>Mammalia</taxon>
        <taxon>Eutheria</taxon>
        <taxon>Euarchontoglires</taxon>
        <taxon>Primates</taxon>
        <taxon>Haplorrhini</taxon>
        <taxon>Catarrhini</taxon>
        <taxon>Hominidae</taxon>
        <taxon>Pongo</taxon>
    </lineage>
</organism>
<reference key="1">
    <citation type="submission" date="2006-08" db="EMBL/GenBank/DDBJ databases">
        <title>Positive selection in transcription factor genes on the human lineage.</title>
        <authorList>
            <person name="Nickel G.C."/>
            <person name="Tefft D.L."/>
            <person name="Trevarthen K."/>
            <person name="Funt J."/>
            <person name="Adams M.D."/>
        </authorList>
    </citation>
    <scope>NUCLEOTIDE SEQUENCE [GENOMIC DNA]</scope>
</reference>
<proteinExistence type="inferred from homology"/>